<name>RL14_RUTMC</name>
<keyword id="KW-0687">Ribonucleoprotein</keyword>
<keyword id="KW-0689">Ribosomal protein</keyword>
<keyword id="KW-0694">RNA-binding</keyword>
<keyword id="KW-0699">rRNA-binding</keyword>
<feature type="chain" id="PRO_1000055693" description="Large ribosomal subunit protein uL14">
    <location>
        <begin position="1"/>
        <end position="122"/>
    </location>
</feature>
<sequence>MIQMQTKLKVADNSGGVKAMCIKVLGGSKRRYANIGDVIKVSIKEAASRGKVKKGDVYDAVVVRTAHGVRRSDGSCIRFDNNAIVLLNTKLEPIGTRIFGPVTRELRSAQFMKIVSLAPEVL</sequence>
<accession>A1AVL0</accession>
<comment type="function">
    <text evidence="1">Binds to 23S rRNA. Forms part of two intersubunit bridges in the 70S ribosome.</text>
</comment>
<comment type="subunit">
    <text evidence="1">Part of the 50S ribosomal subunit. Forms a cluster with proteins L3 and L19. In the 70S ribosome, L14 and L19 interact and together make contacts with the 16S rRNA in bridges B5 and B8.</text>
</comment>
<comment type="similarity">
    <text evidence="1">Belongs to the universal ribosomal protein uL14 family.</text>
</comment>
<evidence type="ECO:0000255" key="1">
    <source>
        <dbReference type="HAMAP-Rule" id="MF_01367"/>
    </source>
</evidence>
<evidence type="ECO:0000305" key="2"/>
<reference key="1">
    <citation type="journal article" date="2007" name="Science">
        <title>The Calyptogena magnifica chemoautotrophic symbiont genome.</title>
        <authorList>
            <person name="Newton I.L.G."/>
            <person name="Woyke T."/>
            <person name="Auchtung T.A."/>
            <person name="Dilly G.F."/>
            <person name="Dutton R.J."/>
            <person name="Fisher M.C."/>
            <person name="Fontanez K.M."/>
            <person name="Lau E."/>
            <person name="Stewart F.J."/>
            <person name="Richardson P.M."/>
            <person name="Barry K.W."/>
            <person name="Saunders E."/>
            <person name="Detter J.C."/>
            <person name="Wu D."/>
            <person name="Eisen J.A."/>
            <person name="Cavanaugh C.M."/>
        </authorList>
    </citation>
    <scope>NUCLEOTIDE SEQUENCE [LARGE SCALE GENOMIC DNA]</scope>
</reference>
<protein>
    <recommendedName>
        <fullName evidence="1">Large ribosomal subunit protein uL14</fullName>
    </recommendedName>
    <alternativeName>
        <fullName evidence="2">50S ribosomal protein L14</fullName>
    </alternativeName>
</protein>
<proteinExistence type="inferred from homology"/>
<dbReference type="EMBL" id="CP000488">
    <property type="protein sequence ID" value="ABL01967.1"/>
    <property type="molecule type" value="Genomic_DNA"/>
</dbReference>
<dbReference type="RefSeq" id="WP_011737593.1">
    <property type="nucleotide sequence ID" value="NC_008610.1"/>
</dbReference>
<dbReference type="SMR" id="A1AVL0"/>
<dbReference type="STRING" id="413404.Rmag_0175"/>
<dbReference type="KEGG" id="rma:Rmag_0175"/>
<dbReference type="eggNOG" id="COG0093">
    <property type="taxonomic scope" value="Bacteria"/>
</dbReference>
<dbReference type="HOGENOM" id="CLU_095071_2_1_6"/>
<dbReference type="OrthoDB" id="9806379at2"/>
<dbReference type="Proteomes" id="UP000002587">
    <property type="component" value="Chromosome"/>
</dbReference>
<dbReference type="GO" id="GO:0022625">
    <property type="term" value="C:cytosolic large ribosomal subunit"/>
    <property type="evidence" value="ECO:0007669"/>
    <property type="project" value="TreeGrafter"/>
</dbReference>
<dbReference type="GO" id="GO:0070180">
    <property type="term" value="F:large ribosomal subunit rRNA binding"/>
    <property type="evidence" value="ECO:0007669"/>
    <property type="project" value="TreeGrafter"/>
</dbReference>
<dbReference type="GO" id="GO:0003735">
    <property type="term" value="F:structural constituent of ribosome"/>
    <property type="evidence" value="ECO:0007669"/>
    <property type="project" value="InterPro"/>
</dbReference>
<dbReference type="GO" id="GO:0006412">
    <property type="term" value="P:translation"/>
    <property type="evidence" value="ECO:0007669"/>
    <property type="project" value="UniProtKB-UniRule"/>
</dbReference>
<dbReference type="CDD" id="cd00337">
    <property type="entry name" value="Ribosomal_uL14"/>
    <property type="match status" value="1"/>
</dbReference>
<dbReference type="FunFam" id="2.40.150.20:FF:000001">
    <property type="entry name" value="50S ribosomal protein L14"/>
    <property type="match status" value="1"/>
</dbReference>
<dbReference type="Gene3D" id="2.40.150.20">
    <property type="entry name" value="Ribosomal protein L14"/>
    <property type="match status" value="1"/>
</dbReference>
<dbReference type="HAMAP" id="MF_01367">
    <property type="entry name" value="Ribosomal_uL14"/>
    <property type="match status" value="1"/>
</dbReference>
<dbReference type="InterPro" id="IPR000218">
    <property type="entry name" value="Ribosomal_uL14"/>
</dbReference>
<dbReference type="InterPro" id="IPR005745">
    <property type="entry name" value="Ribosomal_uL14_bac-type"/>
</dbReference>
<dbReference type="InterPro" id="IPR019972">
    <property type="entry name" value="Ribosomal_uL14_CS"/>
</dbReference>
<dbReference type="InterPro" id="IPR036853">
    <property type="entry name" value="Ribosomal_uL14_sf"/>
</dbReference>
<dbReference type="NCBIfam" id="TIGR01067">
    <property type="entry name" value="rplN_bact"/>
    <property type="match status" value="1"/>
</dbReference>
<dbReference type="PANTHER" id="PTHR11761">
    <property type="entry name" value="50S/60S RIBOSOMAL PROTEIN L14/L23"/>
    <property type="match status" value="1"/>
</dbReference>
<dbReference type="PANTHER" id="PTHR11761:SF3">
    <property type="entry name" value="LARGE RIBOSOMAL SUBUNIT PROTEIN UL14M"/>
    <property type="match status" value="1"/>
</dbReference>
<dbReference type="Pfam" id="PF00238">
    <property type="entry name" value="Ribosomal_L14"/>
    <property type="match status" value="1"/>
</dbReference>
<dbReference type="SMART" id="SM01374">
    <property type="entry name" value="Ribosomal_L14"/>
    <property type="match status" value="1"/>
</dbReference>
<dbReference type="SUPFAM" id="SSF50193">
    <property type="entry name" value="Ribosomal protein L14"/>
    <property type="match status" value="1"/>
</dbReference>
<dbReference type="PROSITE" id="PS00049">
    <property type="entry name" value="RIBOSOMAL_L14"/>
    <property type="match status" value="1"/>
</dbReference>
<organism>
    <name type="scientific">Ruthia magnifica subsp. Calyptogena magnifica</name>
    <dbReference type="NCBI Taxonomy" id="413404"/>
    <lineage>
        <taxon>Bacteria</taxon>
        <taxon>Pseudomonadati</taxon>
        <taxon>Pseudomonadota</taxon>
        <taxon>Gammaproteobacteria</taxon>
        <taxon>Candidatus Pseudothioglobaceae</taxon>
        <taxon>Candidatus Ruthturnera</taxon>
    </lineage>
</organism>
<gene>
    <name evidence="1" type="primary">rplN</name>
    <name type="ordered locus">Rmag_0175</name>
</gene>